<protein>
    <recommendedName>
        <fullName>Proenkephalin-A</fullName>
    </recommendedName>
    <component>
        <recommendedName>
            <fullName>Synenkephalin</fullName>
        </recommendedName>
    </component>
    <component>
        <recommendedName>
            <fullName>Met-enkephalin</fullName>
        </recommendedName>
        <alternativeName>
            <fullName>Opioid growth factor</fullName>
            <shortName>OGF</shortName>
        </alternativeName>
    </component>
    <component>
        <recommendedName>
            <fullName evidence="3">PENK(114-133)</fullName>
        </recommendedName>
    </component>
    <component>
        <recommendedName>
            <fullName evidence="3">PENK(143-184)</fullName>
        </recommendedName>
    </component>
    <component>
        <recommendedName>
            <fullName>Met-enkephalin-Arg-Gly-Leu</fullName>
        </recommendedName>
    </component>
    <component>
        <recommendedName>
            <fullName>Leu-enkephalin</fullName>
        </recommendedName>
    </component>
    <component>
        <recommendedName>
            <fullName evidence="3">PENK(238-259)</fullName>
        </recommendedName>
    </component>
    <component>
        <recommendedName>
            <fullName>Met-enkephalin-Arg-Phe</fullName>
        </recommendedName>
    </component>
</protein>
<comment type="function">
    <molecule>Met-enkephalin</molecule>
    <text evidence="1">Neuropeptide that competes with and mimic the effects of opiate drugs. They play a role in a number of physiologic functions, including pain perception and responses to stress.</text>
</comment>
<comment type="function">
    <molecule>Leu-enkephalin</molecule>
    <text evidence="1">Neuropeptide that competes with and mimic the effects of opiate drugs. They play a role in a number of physiologic functions, including pain perception and responses to stress.</text>
</comment>
<comment type="function">
    <molecule>Met-enkephalin-Arg-Phe</molecule>
    <text evidence="4">Met-enkephalin-Arg-Phe neuropeptide acts as a strong ligand of Mu-type opioid receptor OPRM1. Met-enkephalin-Arg-Phe-binding to OPRM1 in the nucleus accumbens of the brain increases activation of OPRM1, leading to long-term synaptic depression of glutamate release.</text>
</comment>
<comment type="function">
    <molecule>PENK(114-133)</molecule>
    <text evidence="3">Increases glutamate release in the striatum and decreases GABA concentration in the striatum.</text>
</comment>
<comment type="function">
    <molecule>PENK(238-259)</molecule>
    <text evidence="3">Increases glutamate release in the striatum.</text>
</comment>
<comment type="subcellular location">
    <subcellularLocation>
        <location evidence="2">Cytoplasmic vesicle</location>
        <location evidence="2">Secretory vesicle</location>
        <location evidence="2">Chromaffin granule lumen</location>
    </subcellularLocation>
    <subcellularLocation>
        <location evidence="2">Secreted</location>
    </subcellularLocation>
</comment>
<comment type="PTM">
    <text evidence="2">Proenkephalin-A is cleaved by CTSL to generate Met-enkephalin.</text>
</comment>
<comment type="PTM">
    <molecule>Met-enkephalin</molecule>
    <text evidence="1">Processed and degraded by ACE.</text>
</comment>
<comment type="PTM">
    <molecule>Leu-enkephalin</molecule>
    <text evidence="1">Processed and degraded by ACE.</text>
</comment>
<comment type="PTM">
    <molecule>Met-enkephalin-Arg-Gly-Leu</molecule>
    <text evidence="1">Probably cleaved by ACE.</text>
</comment>
<comment type="PTM">
    <molecule>Met-enkephalin-Arg-Phe</molecule>
    <text evidence="3">Processed by ACE to generate Met-enkephalin in the nucleus accumbens of the brain.</text>
</comment>
<comment type="PTM">
    <text evidence="1">The N-terminal domain contains 6 conserved cysteines thought to be involved in disulfide bonding and/or processing.</text>
</comment>
<comment type="similarity">
    <text evidence="7">Belongs to the opioid neuropeptide precursor family.</text>
</comment>
<sequence>MARFLRLCTWLLVLGSCLLATVQAECSQDCAKCSYHLVSPGDINFLACTLECEGQMPSHKIWETCKDLLQVSKPEFPCDSINMFKDSNKQDESHLLAKKYGGFMKRYGGFMKKMDELYPVEPEEEANGGEILAKKYGGFMKKDADEGDTLANSSDLLKELLGTGDNRAREGRHQESTDNDDNMSKRYGGFMRGLKRSPQVEDEAKELQKRYGGFMRRVGRPEWWMDYQKRYGGFLKRFAESLPSDEEAESYSKEVPEIEKRYGGFMRF</sequence>
<proteinExistence type="evidence at transcript level"/>
<evidence type="ECO:0000250" key="1">
    <source>
        <dbReference type="UniProtKB" id="P01210"/>
    </source>
</evidence>
<evidence type="ECO:0000250" key="2">
    <source>
        <dbReference type="UniProtKB" id="P01211"/>
    </source>
</evidence>
<evidence type="ECO:0000250" key="3">
    <source>
        <dbReference type="UniProtKB" id="P04094"/>
    </source>
</evidence>
<evidence type="ECO:0000250" key="4">
    <source>
        <dbReference type="UniProtKB" id="P22005"/>
    </source>
</evidence>
<evidence type="ECO:0000255" key="5"/>
<evidence type="ECO:0000256" key="6">
    <source>
        <dbReference type="SAM" id="MobiDB-lite"/>
    </source>
</evidence>
<evidence type="ECO:0000305" key="7"/>
<accession>P50175</accession>
<accession>Q64030</accession>
<dbReference type="EMBL" id="U09941">
    <property type="protein sequence ID" value="AAA63650.1"/>
    <property type="molecule type" value="Genomic_DNA"/>
</dbReference>
<dbReference type="EMBL" id="S74095">
    <property type="protein sequence ID" value="AAB32115.1"/>
    <property type="molecule type" value="mRNA"/>
</dbReference>
<dbReference type="PIR" id="I53029">
    <property type="entry name" value="I53029"/>
</dbReference>
<dbReference type="STRING" id="10036.ENSMAUP00000018083"/>
<dbReference type="eggNOG" id="ENOG502QWWK">
    <property type="taxonomic scope" value="Eukaryota"/>
</dbReference>
<dbReference type="Proteomes" id="UP000189706">
    <property type="component" value="Unplaced"/>
</dbReference>
<dbReference type="GO" id="GO:0043679">
    <property type="term" value="C:axon terminus"/>
    <property type="evidence" value="ECO:0007669"/>
    <property type="project" value="TreeGrafter"/>
</dbReference>
<dbReference type="GO" id="GO:0034466">
    <property type="term" value="C:chromaffin granule lumen"/>
    <property type="evidence" value="ECO:0007669"/>
    <property type="project" value="UniProtKB-SubCell"/>
</dbReference>
<dbReference type="GO" id="GO:0030425">
    <property type="term" value="C:dendrite"/>
    <property type="evidence" value="ECO:0007669"/>
    <property type="project" value="TreeGrafter"/>
</dbReference>
<dbReference type="GO" id="GO:0005576">
    <property type="term" value="C:extracellular region"/>
    <property type="evidence" value="ECO:0007669"/>
    <property type="project" value="UniProtKB-SubCell"/>
</dbReference>
<dbReference type="GO" id="GO:0043025">
    <property type="term" value="C:neuronal cell body"/>
    <property type="evidence" value="ECO:0007669"/>
    <property type="project" value="TreeGrafter"/>
</dbReference>
<dbReference type="GO" id="GO:0005886">
    <property type="term" value="C:plasma membrane"/>
    <property type="evidence" value="ECO:0007669"/>
    <property type="project" value="TreeGrafter"/>
</dbReference>
<dbReference type="GO" id="GO:0001515">
    <property type="term" value="F:opioid peptide activity"/>
    <property type="evidence" value="ECO:0007669"/>
    <property type="project" value="UniProtKB-KW"/>
</dbReference>
<dbReference type="GO" id="GO:0031628">
    <property type="term" value="F:opioid receptor binding"/>
    <property type="evidence" value="ECO:0007669"/>
    <property type="project" value="TreeGrafter"/>
</dbReference>
<dbReference type="GO" id="GO:0007268">
    <property type="term" value="P:chemical synaptic transmission"/>
    <property type="evidence" value="ECO:0007669"/>
    <property type="project" value="TreeGrafter"/>
</dbReference>
<dbReference type="GO" id="GO:0007218">
    <property type="term" value="P:neuropeptide signaling pathway"/>
    <property type="evidence" value="ECO:0007669"/>
    <property type="project" value="UniProtKB-KW"/>
</dbReference>
<dbReference type="GO" id="GO:0007600">
    <property type="term" value="P:sensory perception"/>
    <property type="evidence" value="ECO:0007669"/>
    <property type="project" value="TreeGrafter"/>
</dbReference>
<dbReference type="InterPro" id="IPR006024">
    <property type="entry name" value="Opioid_neupept"/>
</dbReference>
<dbReference type="InterPro" id="IPR000703">
    <property type="entry name" value="Proenkphlin_A"/>
</dbReference>
<dbReference type="PANTHER" id="PTHR11438">
    <property type="entry name" value="PROENKEPHALIN"/>
    <property type="match status" value="1"/>
</dbReference>
<dbReference type="PANTHER" id="PTHR11438:SF3">
    <property type="entry name" value="PROENKEPHALIN-A"/>
    <property type="match status" value="1"/>
</dbReference>
<dbReference type="Pfam" id="PF01160">
    <property type="entry name" value="Opiods_neuropep"/>
    <property type="match status" value="1"/>
</dbReference>
<dbReference type="PRINTS" id="PR01028">
    <property type="entry name" value="OPIOIDPRCRSR"/>
</dbReference>
<dbReference type="PRINTS" id="PR01029">
    <property type="entry name" value="PENKAPRCRSR"/>
</dbReference>
<dbReference type="PROSITE" id="PS01252">
    <property type="entry name" value="OPIOIDS_PRECURSOR"/>
    <property type="match status" value="1"/>
</dbReference>
<reference key="1">
    <citation type="journal article" date="1994" name="DNA Cell Biol.">
        <title>Cloning and characterization of hamster proenkephalin gene.</title>
        <authorList>
            <person name="Zhu Y.S."/>
            <person name="Branch A.D."/>
            <person name="Robertson H.D."/>
            <person name="Inturrisi C.E."/>
        </authorList>
    </citation>
    <scope>NUCLEOTIDE SEQUENCE [GENOMIC DNA]</scope>
    <source>
        <strain>Syrian</strain>
        <tissue>Liver</tissue>
    </source>
</reference>
<reference key="2">
    <citation type="journal article" date="1994" name="DNA Cell Biol.">
        <title>Molecular cloning and characterization of the hamster preproenkephalin A cDNA.</title>
        <authorList>
            <person name="Beaulieu M."/>
            <person name="Ouellette M."/>
            <person name="Desgroseillers L."/>
            <person name="Brakier-Gingras L."/>
        </authorList>
    </citation>
    <scope>NUCLEOTIDE SEQUENCE [MRNA]</scope>
    <source>
        <strain>Syrian</strain>
        <tissue>Adrenal gland</tissue>
    </source>
</reference>
<name>PENK_MESAU</name>
<organism>
    <name type="scientific">Mesocricetus auratus</name>
    <name type="common">Golden hamster</name>
    <dbReference type="NCBI Taxonomy" id="10036"/>
    <lineage>
        <taxon>Eukaryota</taxon>
        <taxon>Metazoa</taxon>
        <taxon>Chordata</taxon>
        <taxon>Craniata</taxon>
        <taxon>Vertebrata</taxon>
        <taxon>Euteleostomi</taxon>
        <taxon>Mammalia</taxon>
        <taxon>Eutheria</taxon>
        <taxon>Euarchontoglires</taxon>
        <taxon>Glires</taxon>
        <taxon>Rodentia</taxon>
        <taxon>Myomorpha</taxon>
        <taxon>Muroidea</taxon>
        <taxon>Cricetidae</taxon>
        <taxon>Cricetinae</taxon>
        <taxon>Mesocricetus</taxon>
    </lineage>
</organism>
<keyword id="KW-0165">Cleavage on pair of basic residues</keyword>
<keyword id="KW-0968">Cytoplasmic vesicle</keyword>
<keyword id="KW-1015">Disulfide bond</keyword>
<keyword id="KW-0257">Endorphin</keyword>
<keyword id="KW-0527">Neuropeptide</keyword>
<keyword id="KW-0555">Opioid peptide</keyword>
<keyword id="KW-0597">Phosphoprotein</keyword>
<keyword id="KW-1185">Reference proteome</keyword>
<keyword id="KW-0964">Secreted</keyword>
<keyword id="KW-0732">Signal</keyword>
<gene>
    <name type="primary">PENK</name>
    <name type="synonym">ENK</name>
</gene>
<feature type="signal peptide" evidence="5">
    <location>
        <begin position="1"/>
        <end position="24"/>
    </location>
</feature>
<feature type="peptide" id="PRO_0000008255" description="Synenkephalin">
    <location>
        <begin position="25"/>
        <end position="97"/>
    </location>
</feature>
<feature type="peptide" id="PRO_0000008256" description="Met-enkephalin">
    <location>
        <begin position="100"/>
        <end position="104"/>
    </location>
</feature>
<feature type="peptide" id="PRO_0000008257" description="Met-enkephalin">
    <location>
        <begin position="107"/>
        <end position="111"/>
    </location>
</feature>
<feature type="peptide" id="PRO_0000377688" description="PENK(114-133)" evidence="3">
    <location>
        <begin position="114"/>
        <end position="133"/>
    </location>
</feature>
<feature type="peptide" id="PRO_0000008259" description="Met-enkephalin">
    <location>
        <begin position="136"/>
        <end position="140"/>
    </location>
</feature>
<feature type="peptide" id="PRO_0000377689" description="PENK(143-184)" evidence="3">
    <location>
        <begin position="143"/>
        <end position="184"/>
    </location>
</feature>
<feature type="peptide" id="PRO_0000008261" description="Met-enkephalin-Arg-Gly-Leu">
    <location>
        <begin position="187"/>
        <end position="194"/>
    </location>
</feature>
<feature type="propeptide" id="PRO_0000008262">
    <location>
        <begin position="197"/>
        <end position="208"/>
    </location>
</feature>
<feature type="peptide" id="PRO_0000008263" description="Met-enkephalin">
    <location>
        <begin position="211"/>
        <end position="215"/>
    </location>
</feature>
<feature type="propeptide" id="PRO_0000008264">
    <location>
        <begin position="218"/>
        <end position="228"/>
    </location>
</feature>
<feature type="peptide" id="PRO_0000008265" description="Leu-enkephalin">
    <location>
        <begin position="231"/>
        <end position="235"/>
    </location>
</feature>
<feature type="peptide" id="PRO_0000377690" description="PENK(238-259)" evidence="3">
    <location>
        <begin position="238"/>
        <end position="259"/>
    </location>
</feature>
<feature type="peptide" id="PRO_0000008267" description="Met-enkephalin-Arg-Phe">
    <location>
        <begin position="262"/>
        <end position="268"/>
    </location>
</feature>
<feature type="region of interest" description="Disordered" evidence="6">
    <location>
        <begin position="162"/>
        <end position="185"/>
    </location>
</feature>
<feature type="compositionally biased region" description="Basic and acidic residues" evidence="6">
    <location>
        <begin position="166"/>
        <end position="176"/>
    </location>
</feature>
<feature type="site" description="Cleavage; by CTSL" evidence="2">
    <location>
        <begin position="111"/>
        <end position="112"/>
    </location>
</feature>
<feature type="site" description="Cleavage; by CTSL" evidence="2">
    <location>
        <begin position="112"/>
        <end position="113"/>
    </location>
</feature>
<feature type="site" description="Cleavage; by CTSL" evidence="2">
    <location>
        <begin position="133"/>
        <end position="134"/>
    </location>
</feature>
<feature type="site" description="Cleavage; by CTSL" evidence="2">
    <location>
        <begin position="215"/>
        <end position="216"/>
    </location>
</feature>
<feature type="site" description="Cleavage; by CTSL" evidence="2">
    <location>
        <begin position="216"/>
        <end position="217"/>
    </location>
</feature>
<feature type="site" description="Cleavage; by CTSL" evidence="2">
    <location>
        <begin position="219"/>
        <end position="220"/>
    </location>
</feature>
<feature type="modified residue" description="Phosphoserine" evidence="3">
    <location>
        <position position="252"/>
    </location>
</feature>
<feature type="disulfide bond" evidence="1">
    <location>
        <begin position="26"/>
        <end position="48"/>
    </location>
</feature>
<feature type="disulfide bond" evidence="1">
    <location>
        <begin position="30"/>
        <end position="52"/>
    </location>
</feature>
<feature type="disulfide bond" evidence="1">
    <location>
        <begin position="33"/>
        <end position="65"/>
    </location>
</feature>
<feature type="sequence conflict" description="In Ref. 2; AAB32115." evidence="7" ref="2">
    <original>C</original>
    <variation>W</variation>
    <location>
        <position position="78"/>
    </location>
</feature>